<accession>Q57888</accession>
<sequence>MISREEAINFLNSTSSKDILDKLAQINNTFKREYITYSKNVFIPLSKWCRNKCGYCIFREDKPSLMKPNEVKEILLKGDRLGCREALFTFGEHVDENKEIKEQLKSMGYDNILEYLYDLEEWTLNNTSLLPHTNCGILNYDELKMLKDVNASMGLMLENASERLMNTIAHKHSPGKHPKLRIEMIENAGKLKIPFTTGLLIGIGETNEEIVDSLFKIKEIHEKYGHIQEVIIQNFRAKKGIPMENFKEPSPIKMLKVIILAKLILDDISIQIPPNLNRETGQLFLLAGVDDWGGVSPLTRDYVNPEAEWPEIKELREWTEELGLKLKMRLPVYDKYISEEWLSEKVYNKIIEMGWLKE</sequence>
<name>COFG_METJA</name>
<gene>
    <name type="primary">cofG</name>
    <name type="ordered locus">MJ0446</name>
</gene>
<proteinExistence type="evidence at protein level"/>
<evidence type="ECO:0000250" key="1"/>
<evidence type="ECO:0000255" key="2">
    <source>
        <dbReference type="PROSITE-ProRule" id="PRU01266"/>
    </source>
</evidence>
<evidence type="ECO:0000269" key="3">
    <source>
    </source>
</evidence>
<evidence type="ECO:0000269" key="4">
    <source>
    </source>
</evidence>
<evidence type="ECO:0000269" key="5">
    <source>
    </source>
</evidence>
<evidence type="ECO:0000305" key="6"/>
<dbReference type="EC" id="4.3.1.32" evidence="3 4 5"/>
<dbReference type="EMBL" id="L77117">
    <property type="protein sequence ID" value="AAB98436.1"/>
    <property type="status" value="ALT_INIT"/>
    <property type="molecule type" value="Genomic_DNA"/>
</dbReference>
<dbReference type="PIR" id="F64355">
    <property type="entry name" value="F64355"/>
</dbReference>
<dbReference type="RefSeq" id="WP_064496498.1">
    <property type="nucleotide sequence ID" value="NC_000909.1"/>
</dbReference>
<dbReference type="SMR" id="Q57888"/>
<dbReference type="FunCoup" id="Q57888">
    <property type="interactions" value="110"/>
</dbReference>
<dbReference type="STRING" id="243232.MJ_0446"/>
<dbReference type="PaxDb" id="243232-MJ_0446"/>
<dbReference type="EnsemblBacteria" id="AAB98436">
    <property type="protein sequence ID" value="AAB98436"/>
    <property type="gene ID" value="MJ_0446"/>
</dbReference>
<dbReference type="GeneID" id="1451306"/>
<dbReference type="KEGG" id="mja:MJ_0446"/>
<dbReference type="eggNOG" id="arCOG00657">
    <property type="taxonomic scope" value="Archaea"/>
</dbReference>
<dbReference type="HOGENOM" id="CLU_054174_0_0_2"/>
<dbReference type="InParanoid" id="Q57888"/>
<dbReference type="OrthoDB" id="35347at2157"/>
<dbReference type="PhylomeDB" id="Q57888"/>
<dbReference type="BioCyc" id="MetaCyc:MONOMER-12178"/>
<dbReference type="BRENDA" id="4.3.1.32">
    <property type="organism ID" value="3260"/>
</dbReference>
<dbReference type="UniPathway" id="UPA00072"/>
<dbReference type="Proteomes" id="UP000000805">
    <property type="component" value="Chromosome"/>
</dbReference>
<dbReference type="GO" id="GO:0051539">
    <property type="term" value="F:4 iron, 4 sulfur cluster binding"/>
    <property type="evidence" value="ECO:0007669"/>
    <property type="project" value="UniProtKB-KW"/>
</dbReference>
<dbReference type="GO" id="GO:0044689">
    <property type="term" value="F:7,8-didemethyl-8-hydroxy-5-deazariboflavin synthase activity"/>
    <property type="evidence" value="ECO:0000314"/>
    <property type="project" value="MENGO"/>
</dbReference>
<dbReference type="GO" id="GO:0005506">
    <property type="term" value="F:iron ion binding"/>
    <property type="evidence" value="ECO:0007669"/>
    <property type="project" value="UniProtKB-UniRule"/>
</dbReference>
<dbReference type="GO" id="GO:0016765">
    <property type="term" value="F:transferase activity, transferring alkyl or aryl (other than methyl) groups"/>
    <property type="evidence" value="ECO:0007669"/>
    <property type="project" value="InterPro"/>
</dbReference>
<dbReference type="CDD" id="cd01335">
    <property type="entry name" value="Radical_SAM"/>
    <property type="match status" value="1"/>
</dbReference>
<dbReference type="FunFam" id="3.20.20.70:FF:000134">
    <property type="entry name" value="7,8-didemethyl-8-hydroxy-5-deazariboflavin synthase"/>
    <property type="match status" value="1"/>
</dbReference>
<dbReference type="Gene3D" id="3.20.20.70">
    <property type="entry name" value="Aldolase class I"/>
    <property type="match status" value="1"/>
</dbReference>
<dbReference type="HAMAP" id="MF_01611">
    <property type="entry name" value="FO_synth_sub1"/>
    <property type="match status" value="1"/>
</dbReference>
<dbReference type="InterPro" id="IPR013785">
    <property type="entry name" value="Aldolase_TIM"/>
</dbReference>
<dbReference type="InterPro" id="IPR019939">
    <property type="entry name" value="CofG_family"/>
</dbReference>
<dbReference type="InterPro" id="IPR006638">
    <property type="entry name" value="Elp3/MiaA/NifB-like_rSAM"/>
</dbReference>
<dbReference type="InterPro" id="IPR034405">
    <property type="entry name" value="F420"/>
</dbReference>
<dbReference type="InterPro" id="IPR007197">
    <property type="entry name" value="rSAM"/>
</dbReference>
<dbReference type="NCBIfam" id="TIGR03550">
    <property type="entry name" value="F420_cofG"/>
    <property type="match status" value="1"/>
</dbReference>
<dbReference type="NCBIfam" id="NF004884">
    <property type="entry name" value="PRK06245.1"/>
    <property type="match status" value="1"/>
</dbReference>
<dbReference type="PANTHER" id="PTHR43076:SF15">
    <property type="entry name" value="7,8-DIDEMETHYL-8-HYDROXY-5-DEAZARIBOFLAVIN SYNTHASE"/>
    <property type="match status" value="1"/>
</dbReference>
<dbReference type="PANTHER" id="PTHR43076">
    <property type="entry name" value="FO SYNTHASE (COFH)"/>
    <property type="match status" value="1"/>
</dbReference>
<dbReference type="Pfam" id="PF04055">
    <property type="entry name" value="Radical_SAM"/>
    <property type="match status" value="1"/>
</dbReference>
<dbReference type="SFLD" id="SFLDF00294">
    <property type="entry name" value="7_8-didemethyl-8-hydroxy-5-dea"/>
    <property type="match status" value="1"/>
</dbReference>
<dbReference type="SFLD" id="SFLDS00029">
    <property type="entry name" value="Radical_SAM"/>
    <property type="match status" value="1"/>
</dbReference>
<dbReference type="SMART" id="SM00729">
    <property type="entry name" value="Elp3"/>
    <property type="match status" value="1"/>
</dbReference>
<dbReference type="SUPFAM" id="SSF102114">
    <property type="entry name" value="Radical SAM enzymes"/>
    <property type="match status" value="1"/>
</dbReference>
<dbReference type="PROSITE" id="PS51918">
    <property type="entry name" value="RADICAL_SAM"/>
    <property type="match status" value="1"/>
</dbReference>
<protein>
    <recommendedName>
        <fullName>7,8-didemethyl-8-hydroxy-5-deazariboflavin synthase</fullName>
        <ecNumber evidence="3 4 5">4.3.1.32</ecNumber>
    </recommendedName>
    <alternativeName>
        <fullName>FO synthase subunit 1</fullName>
    </alternativeName>
</protein>
<feature type="chain" id="PRO_0000147764" description="7,8-didemethyl-8-hydroxy-5-deazariboflavin synthase">
    <location>
        <begin position="1"/>
        <end position="358"/>
    </location>
</feature>
<feature type="domain" description="Radical SAM core" evidence="2">
    <location>
        <begin position="35"/>
        <end position="275"/>
    </location>
</feature>
<feature type="binding site" evidence="1">
    <location>
        <position position="49"/>
    </location>
    <ligand>
        <name>[4Fe-4S] cluster</name>
        <dbReference type="ChEBI" id="CHEBI:49883"/>
        <note>4Fe-4S-S-AdoMet</note>
    </ligand>
</feature>
<feature type="binding site" evidence="1">
    <location>
        <position position="53"/>
    </location>
    <ligand>
        <name>[4Fe-4S] cluster</name>
        <dbReference type="ChEBI" id="CHEBI:49883"/>
        <note>4Fe-4S-S-AdoMet</note>
    </ligand>
</feature>
<feature type="binding site" evidence="1">
    <location>
        <position position="56"/>
    </location>
    <ligand>
        <name>[4Fe-4S] cluster</name>
        <dbReference type="ChEBI" id="CHEBI:49883"/>
        <note>4Fe-4S-S-AdoMet</note>
    </ligand>
</feature>
<organism>
    <name type="scientific">Methanocaldococcus jannaschii (strain ATCC 43067 / DSM 2661 / JAL-1 / JCM 10045 / NBRC 100440)</name>
    <name type="common">Methanococcus jannaschii</name>
    <dbReference type="NCBI Taxonomy" id="243232"/>
    <lineage>
        <taxon>Archaea</taxon>
        <taxon>Methanobacteriati</taxon>
        <taxon>Methanobacteriota</taxon>
        <taxon>Methanomada group</taxon>
        <taxon>Methanococci</taxon>
        <taxon>Methanococcales</taxon>
        <taxon>Methanocaldococcaceae</taxon>
        <taxon>Methanocaldococcus</taxon>
    </lineage>
</organism>
<keyword id="KW-0004">4Fe-4S</keyword>
<keyword id="KW-0408">Iron</keyword>
<keyword id="KW-0411">Iron-sulfur</keyword>
<keyword id="KW-0456">Lyase</keyword>
<keyword id="KW-0479">Metal-binding</keyword>
<keyword id="KW-1185">Reference proteome</keyword>
<keyword id="KW-0949">S-adenosyl-L-methionine</keyword>
<comment type="function">
    <text evidence="3 4 5">Catalyzes the radical-mediated synthesis of 7,8-didemethyl-8-hydroxy-5-deazariboflavin (FO) from 5-amino-5-(4-hydroxybenzyl)-6-(D-ribitylimino)-5,6-dihydrouracil.</text>
</comment>
<comment type="catalytic activity">
    <reaction evidence="3">
        <text>5-amino-5-(4-hydroxybenzyl)-6-(D-ribitylimino)-5,6-dihydrouracil + S-adenosyl-L-methionine = 7,8-didemethyl-8-hydroxy-5-deazariboflavin + 5'-deoxyadenosine + L-methionine + NH4(+) + H(+)</text>
        <dbReference type="Rhea" id="RHEA:55204"/>
        <dbReference type="ChEBI" id="CHEBI:15378"/>
        <dbReference type="ChEBI" id="CHEBI:17319"/>
        <dbReference type="ChEBI" id="CHEBI:28938"/>
        <dbReference type="ChEBI" id="CHEBI:57844"/>
        <dbReference type="ChEBI" id="CHEBI:59789"/>
        <dbReference type="ChEBI" id="CHEBI:59904"/>
        <dbReference type="ChEBI" id="CHEBI:85936"/>
        <dbReference type="EC" id="4.3.1.32"/>
    </reaction>
</comment>
<comment type="cofactor">
    <cofactor>
        <name>[4Fe-4S] cluster</name>
        <dbReference type="ChEBI" id="CHEBI:49883"/>
    </cofactor>
    <text>Binds 1 [4Fe-4S] cluster. The cluster is coordinated with 3 cysteines and an exchangeable S-adenosyl-L-methionine.</text>
</comment>
<comment type="pathway">
    <text>Cofactor biosynthesis; coenzyme F0 biosynthesis.</text>
</comment>
<comment type="subunit">
    <text>Consists of two subunits, CofG and CofH.</text>
</comment>
<comment type="similarity">
    <text evidence="6">Belongs to the radical SAM superfamily. CofG family.</text>
</comment>
<comment type="sequence caution" evidence="6">
    <conflict type="erroneous initiation">
        <sequence resource="EMBL-CDS" id="AAB98436"/>
    </conflict>
</comment>
<reference key="1">
    <citation type="journal article" date="1996" name="Science">
        <title>Complete genome sequence of the methanogenic archaeon, Methanococcus jannaschii.</title>
        <authorList>
            <person name="Bult C.J."/>
            <person name="White O."/>
            <person name="Olsen G.J."/>
            <person name="Zhou L."/>
            <person name="Fleischmann R.D."/>
            <person name="Sutton G.G."/>
            <person name="Blake J.A."/>
            <person name="FitzGerald L.M."/>
            <person name="Clayton R.A."/>
            <person name="Gocayne J.D."/>
            <person name="Kerlavage A.R."/>
            <person name="Dougherty B.A."/>
            <person name="Tomb J.-F."/>
            <person name="Adams M.D."/>
            <person name="Reich C.I."/>
            <person name="Overbeek R."/>
            <person name="Kirkness E.F."/>
            <person name="Weinstock K.G."/>
            <person name="Merrick J.M."/>
            <person name="Glodek A."/>
            <person name="Scott J.L."/>
            <person name="Geoghagen N.S.M."/>
            <person name="Weidman J.F."/>
            <person name="Fuhrmann J.L."/>
            <person name="Nguyen D."/>
            <person name="Utterback T.R."/>
            <person name="Kelley J.M."/>
            <person name="Peterson J.D."/>
            <person name="Sadow P.W."/>
            <person name="Hanna M.C."/>
            <person name="Cotton M.D."/>
            <person name="Roberts K.M."/>
            <person name="Hurst M.A."/>
            <person name="Kaine B.P."/>
            <person name="Borodovsky M."/>
            <person name="Klenk H.-P."/>
            <person name="Fraser C.M."/>
            <person name="Smith H.O."/>
            <person name="Woese C.R."/>
            <person name="Venter J.C."/>
        </authorList>
    </citation>
    <scope>NUCLEOTIDE SEQUENCE [LARGE SCALE GENOMIC DNA]</scope>
    <source>
        <strain>ATCC 43067 / DSM 2661 / JAL-1 / JCM 10045 / NBRC 100440</strain>
    </source>
</reference>
<reference key="2">
    <citation type="journal article" date="2003" name="Arch. Microbiol.">
        <title>Identification of the 7,8-didemethyl-8-hydroxy-5-deazariboflavin synthase required for coenzyme F(420) biosynthesis.</title>
        <authorList>
            <person name="Graham D.E."/>
            <person name="Xu H."/>
            <person name="White R.H."/>
        </authorList>
    </citation>
    <scope>FUNCTION</scope>
    <scope>CATALYTIC ACTIVITY</scope>
    <scope>CHARACTERIZATION</scope>
    <source>
        <strain>ATCC 43067 / DSM 2661 / JAL-1 / JCM 10045 / NBRC 100440</strain>
    </source>
</reference>
<reference key="3">
    <citation type="journal article" date="2012" name="J. Am. Chem. Soc.">
        <title>Biosynthesis of F0, precursor of the F420 cofactor, requires a unique two radical-SAM domain enzyme and tyrosine as substrate.</title>
        <authorList>
            <person name="Decamps L."/>
            <person name="Philmus B."/>
            <person name="Benjdia A."/>
            <person name="White R."/>
            <person name="Begley T.P."/>
            <person name="Berteau O."/>
        </authorList>
    </citation>
    <scope>FUNCTION</scope>
    <scope>CATALYTIC ACTIVITY</scope>
</reference>
<reference key="4">
    <citation type="journal article" date="2015" name="J. Am. Chem. Soc.">
        <title>Biosynthetic versatility and coordinated action of 5'-deoxyadenosyl radicals in deazaflavin biosynthesis.</title>
        <authorList>
            <person name="Philmus B."/>
            <person name="Decamps L."/>
            <person name="Berteau O."/>
            <person name="Begley T.P."/>
        </authorList>
    </citation>
    <scope>FUNCTION</scope>
    <scope>CATALYTIC ACTIVITY</scope>
    <scope>REACTION MECHANISM</scope>
</reference>